<keyword id="KW-1003">Cell membrane</keyword>
<keyword id="KW-0472">Membrane</keyword>
<keyword id="KW-1185">Reference proteome</keyword>
<keyword id="KW-0812">Transmembrane</keyword>
<keyword id="KW-1133">Transmembrane helix</keyword>
<proteinExistence type="inferred from homology"/>
<sequence>MERLIEKLLYSSRWIMAPIYLGLSLLLLALGIKFFQEIFHLLPNIFTIKEVDLILVALSLIDVSLVGGLIVMVMFSGYENFVSKLDVDESEDKLGWLGKLDTSSLKNKVSASIVAISSIHLLKVFMNTENIESDKIKWYLLLHITFVVSAFAMGYLDKITKK</sequence>
<organism>
    <name type="scientific">Vibrio cholerae serotype O1 (strain ATCC 39315 / El Tor Inaba N16961)</name>
    <dbReference type="NCBI Taxonomy" id="243277"/>
    <lineage>
        <taxon>Bacteria</taxon>
        <taxon>Pseudomonadati</taxon>
        <taxon>Pseudomonadota</taxon>
        <taxon>Gammaproteobacteria</taxon>
        <taxon>Vibrionales</taxon>
        <taxon>Vibrionaceae</taxon>
        <taxon>Vibrio</taxon>
    </lineage>
</organism>
<evidence type="ECO:0000255" key="1">
    <source>
        <dbReference type="HAMAP-Rule" id="MF_00143"/>
    </source>
</evidence>
<reference key="1">
    <citation type="journal article" date="2000" name="Nature">
        <title>DNA sequence of both chromosomes of the cholera pathogen Vibrio cholerae.</title>
        <authorList>
            <person name="Heidelberg J.F."/>
            <person name="Eisen J.A."/>
            <person name="Nelson W.C."/>
            <person name="Clayton R.A."/>
            <person name="Gwinn M.L."/>
            <person name="Dodson R.J."/>
            <person name="Haft D.H."/>
            <person name="Hickey E.K."/>
            <person name="Peterson J.D."/>
            <person name="Umayam L.A."/>
            <person name="Gill S.R."/>
            <person name="Nelson K.E."/>
            <person name="Read T.D."/>
            <person name="Tettelin H."/>
            <person name="Richardson D.L."/>
            <person name="Ermolaeva M.D."/>
            <person name="Vamathevan J.J."/>
            <person name="Bass S."/>
            <person name="Qin H."/>
            <person name="Dragoi I."/>
            <person name="Sellers P."/>
            <person name="McDonald L.A."/>
            <person name="Utterback T.R."/>
            <person name="Fleischmann R.D."/>
            <person name="Nierman W.C."/>
            <person name="White O."/>
            <person name="Salzberg S.L."/>
            <person name="Smith H.O."/>
            <person name="Colwell R.R."/>
            <person name="Mekalanos J.J."/>
            <person name="Venter J.C."/>
            <person name="Fraser C.M."/>
        </authorList>
    </citation>
    <scope>NUCLEOTIDE SEQUENCE [LARGE SCALE GENOMIC DNA]</scope>
    <source>
        <strain>ATCC 39315 / El Tor Inaba N16961</strain>
    </source>
</reference>
<dbReference type="EMBL" id="AE003852">
    <property type="protein sequence ID" value="AAF93384.1"/>
    <property type="molecule type" value="Genomic_DNA"/>
</dbReference>
<dbReference type="PIR" id="B82350">
    <property type="entry name" value="B82350"/>
</dbReference>
<dbReference type="RefSeq" id="NP_229865.1">
    <property type="nucleotide sequence ID" value="NC_002505.1"/>
</dbReference>
<dbReference type="RefSeq" id="WP_000440285.1">
    <property type="nucleotide sequence ID" value="NZ_LT906614.1"/>
</dbReference>
<dbReference type="STRING" id="243277.VC_0208"/>
<dbReference type="DNASU" id="2614845"/>
<dbReference type="EnsemblBacteria" id="AAF93384">
    <property type="protein sequence ID" value="AAF93384"/>
    <property type="gene ID" value="VC_0208"/>
</dbReference>
<dbReference type="KEGG" id="vch:VC_0208"/>
<dbReference type="PATRIC" id="fig|243277.26.peg.189"/>
<dbReference type="eggNOG" id="COG2862">
    <property type="taxonomic scope" value="Bacteria"/>
</dbReference>
<dbReference type="HOGENOM" id="CLU_097887_1_1_6"/>
<dbReference type="Proteomes" id="UP000000584">
    <property type="component" value="Chromosome 1"/>
</dbReference>
<dbReference type="GO" id="GO:0005886">
    <property type="term" value="C:plasma membrane"/>
    <property type="evidence" value="ECO:0000318"/>
    <property type="project" value="GO_Central"/>
</dbReference>
<dbReference type="HAMAP" id="MF_00143">
    <property type="entry name" value="UPF0114"/>
    <property type="match status" value="1"/>
</dbReference>
<dbReference type="InterPro" id="IPR005134">
    <property type="entry name" value="UPF0114"/>
</dbReference>
<dbReference type="InterPro" id="IPR020761">
    <property type="entry name" value="UPF0114_bac"/>
</dbReference>
<dbReference type="NCBIfam" id="TIGR00645">
    <property type="entry name" value="HI0507"/>
    <property type="match status" value="1"/>
</dbReference>
<dbReference type="PANTHER" id="PTHR38596">
    <property type="entry name" value="UPF0114 PROTEIN YQHA"/>
    <property type="match status" value="1"/>
</dbReference>
<dbReference type="PANTHER" id="PTHR38596:SF1">
    <property type="entry name" value="UPF0114 PROTEIN YQHA"/>
    <property type="match status" value="1"/>
</dbReference>
<dbReference type="Pfam" id="PF03350">
    <property type="entry name" value="UPF0114"/>
    <property type="match status" value="1"/>
</dbReference>
<feature type="chain" id="PRO_0000214381" description="UPF0114 protein VC_0208">
    <location>
        <begin position="1"/>
        <end position="162"/>
    </location>
</feature>
<feature type="transmembrane region" description="Helical" evidence="1">
    <location>
        <begin position="10"/>
        <end position="32"/>
    </location>
</feature>
<feature type="transmembrane region" description="Helical" evidence="1">
    <location>
        <begin position="53"/>
        <end position="75"/>
    </location>
</feature>
<feature type="transmembrane region" description="Helical" evidence="1">
    <location>
        <begin position="109"/>
        <end position="126"/>
    </location>
</feature>
<feature type="transmembrane region" description="Helical" evidence="1">
    <location>
        <begin position="139"/>
        <end position="156"/>
    </location>
</feature>
<accession>Q9KVD8</accession>
<name>Y208_VIBCH</name>
<gene>
    <name type="ordered locus">VC_0208</name>
</gene>
<comment type="subcellular location">
    <subcellularLocation>
        <location evidence="1">Cell membrane</location>
        <topology evidence="1">Multi-pass membrane protein</topology>
    </subcellularLocation>
</comment>
<comment type="similarity">
    <text evidence="1">Belongs to the UPF0114 family.</text>
</comment>
<protein>
    <recommendedName>
        <fullName evidence="1">UPF0114 protein VC_0208</fullName>
    </recommendedName>
</protein>